<gene>
    <name evidence="1" type="primary">purT</name>
    <name type="ordered locus">Pnap_3571</name>
</gene>
<evidence type="ECO:0000255" key="1">
    <source>
        <dbReference type="HAMAP-Rule" id="MF_01643"/>
    </source>
</evidence>
<name>PURT_POLNA</name>
<keyword id="KW-0067">ATP-binding</keyword>
<keyword id="KW-0436">Ligase</keyword>
<keyword id="KW-0460">Magnesium</keyword>
<keyword id="KW-0479">Metal-binding</keyword>
<keyword id="KW-0547">Nucleotide-binding</keyword>
<keyword id="KW-0658">Purine biosynthesis</keyword>
<keyword id="KW-1185">Reference proteome</keyword>
<proteinExistence type="inferred from homology"/>
<feature type="chain" id="PRO_0000319196" description="Formate-dependent phosphoribosylglycinamide formyltransferase">
    <location>
        <begin position="1"/>
        <end position="401"/>
    </location>
</feature>
<feature type="domain" description="ATP-grasp" evidence="1">
    <location>
        <begin position="120"/>
        <end position="315"/>
    </location>
</feature>
<feature type="binding site" evidence="1">
    <location>
        <begin position="22"/>
        <end position="23"/>
    </location>
    <ligand>
        <name>N(1)-(5-phospho-beta-D-ribosyl)glycinamide</name>
        <dbReference type="ChEBI" id="CHEBI:143788"/>
    </ligand>
</feature>
<feature type="binding site" evidence="1">
    <location>
        <position position="82"/>
    </location>
    <ligand>
        <name>N(1)-(5-phospho-beta-D-ribosyl)glycinamide</name>
        <dbReference type="ChEBI" id="CHEBI:143788"/>
    </ligand>
</feature>
<feature type="binding site" evidence="1">
    <location>
        <position position="115"/>
    </location>
    <ligand>
        <name>ATP</name>
        <dbReference type="ChEBI" id="CHEBI:30616"/>
    </ligand>
</feature>
<feature type="binding site" evidence="1">
    <location>
        <position position="157"/>
    </location>
    <ligand>
        <name>ATP</name>
        <dbReference type="ChEBI" id="CHEBI:30616"/>
    </ligand>
</feature>
<feature type="binding site" evidence="1">
    <location>
        <begin position="162"/>
        <end position="167"/>
    </location>
    <ligand>
        <name>ATP</name>
        <dbReference type="ChEBI" id="CHEBI:30616"/>
    </ligand>
</feature>
<feature type="binding site" evidence="1">
    <location>
        <begin position="197"/>
        <end position="200"/>
    </location>
    <ligand>
        <name>ATP</name>
        <dbReference type="ChEBI" id="CHEBI:30616"/>
    </ligand>
</feature>
<feature type="binding site" evidence="1">
    <location>
        <position position="205"/>
    </location>
    <ligand>
        <name>ATP</name>
        <dbReference type="ChEBI" id="CHEBI:30616"/>
    </ligand>
</feature>
<feature type="binding site" evidence="1">
    <location>
        <position position="274"/>
    </location>
    <ligand>
        <name>Mg(2+)</name>
        <dbReference type="ChEBI" id="CHEBI:18420"/>
    </ligand>
</feature>
<feature type="binding site" evidence="1">
    <location>
        <position position="286"/>
    </location>
    <ligand>
        <name>Mg(2+)</name>
        <dbReference type="ChEBI" id="CHEBI:18420"/>
    </ligand>
</feature>
<feature type="binding site" evidence="1">
    <location>
        <position position="293"/>
    </location>
    <ligand>
        <name>N(1)-(5-phospho-beta-D-ribosyl)glycinamide</name>
        <dbReference type="ChEBI" id="CHEBI:143788"/>
    </ligand>
</feature>
<feature type="binding site" evidence="1">
    <location>
        <position position="362"/>
    </location>
    <ligand>
        <name>N(1)-(5-phospho-beta-D-ribosyl)glycinamide</name>
        <dbReference type="ChEBI" id="CHEBI:143788"/>
    </ligand>
</feature>
<feature type="binding site" evidence="1">
    <location>
        <begin position="369"/>
        <end position="370"/>
    </location>
    <ligand>
        <name>N(1)-(5-phospho-beta-D-ribosyl)glycinamide</name>
        <dbReference type="ChEBI" id="CHEBI:143788"/>
    </ligand>
</feature>
<reference key="1">
    <citation type="journal article" date="2009" name="Environ. Microbiol.">
        <title>The genome of Polaromonas naphthalenivorans strain CJ2, isolated from coal tar-contaminated sediment, reveals physiological and metabolic versatility and evolution through extensive horizontal gene transfer.</title>
        <authorList>
            <person name="Yagi J.M."/>
            <person name="Sims D."/>
            <person name="Brettin T."/>
            <person name="Bruce D."/>
            <person name="Madsen E.L."/>
        </authorList>
    </citation>
    <scope>NUCLEOTIDE SEQUENCE [LARGE SCALE GENOMIC DNA]</scope>
    <source>
        <strain>CJ2</strain>
    </source>
</reference>
<dbReference type="EC" id="6.3.1.21" evidence="1"/>
<dbReference type="EMBL" id="CP000529">
    <property type="protein sequence ID" value="ABM38867.1"/>
    <property type="molecule type" value="Genomic_DNA"/>
</dbReference>
<dbReference type="RefSeq" id="WP_011802937.1">
    <property type="nucleotide sequence ID" value="NC_008781.1"/>
</dbReference>
<dbReference type="SMR" id="A1VT89"/>
<dbReference type="STRING" id="365044.Pnap_3571"/>
<dbReference type="KEGG" id="pna:Pnap_3571"/>
<dbReference type="eggNOG" id="COG0027">
    <property type="taxonomic scope" value="Bacteria"/>
</dbReference>
<dbReference type="HOGENOM" id="CLU_011534_1_3_4"/>
<dbReference type="OrthoDB" id="9804625at2"/>
<dbReference type="UniPathway" id="UPA00074">
    <property type="reaction ID" value="UER00127"/>
</dbReference>
<dbReference type="Proteomes" id="UP000000644">
    <property type="component" value="Chromosome"/>
</dbReference>
<dbReference type="GO" id="GO:0005829">
    <property type="term" value="C:cytosol"/>
    <property type="evidence" value="ECO:0007669"/>
    <property type="project" value="TreeGrafter"/>
</dbReference>
<dbReference type="GO" id="GO:0005524">
    <property type="term" value="F:ATP binding"/>
    <property type="evidence" value="ECO:0007669"/>
    <property type="project" value="UniProtKB-UniRule"/>
</dbReference>
<dbReference type="GO" id="GO:0000287">
    <property type="term" value="F:magnesium ion binding"/>
    <property type="evidence" value="ECO:0007669"/>
    <property type="project" value="InterPro"/>
</dbReference>
<dbReference type="GO" id="GO:0043815">
    <property type="term" value="F:phosphoribosylglycinamide formyltransferase 2 activity"/>
    <property type="evidence" value="ECO:0007669"/>
    <property type="project" value="UniProtKB-UniRule"/>
</dbReference>
<dbReference type="GO" id="GO:0004644">
    <property type="term" value="F:phosphoribosylglycinamide formyltransferase activity"/>
    <property type="evidence" value="ECO:0007669"/>
    <property type="project" value="InterPro"/>
</dbReference>
<dbReference type="GO" id="GO:0006189">
    <property type="term" value="P:'de novo' IMP biosynthetic process"/>
    <property type="evidence" value="ECO:0007669"/>
    <property type="project" value="UniProtKB-UniRule"/>
</dbReference>
<dbReference type="Gene3D" id="3.40.50.20">
    <property type="match status" value="1"/>
</dbReference>
<dbReference type="Gene3D" id="3.30.1490.20">
    <property type="entry name" value="ATP-grasp fold, A domain"/>
    <property type="match status" value="1"/>
</dbReference>
<dbReference type="Gene3D" id="3.30.470.20">
    <property type="entry name" value="ATP-grasp fold, B domain"/>
    <property type="match status" value="1"/>
</dbReference>
<dbReference type="HAMAP" id="MF_01643">
    <property type="entry name" value="PurT"/>
    <property type="match status" value="1"/>
</dbReference>
<dbReference type="InterPro" id="IPR011761">
    <property type="entry name" value="ATP-grasp"/>
</dbReference>
<dbReference type="InterPro" id="IPR003135">
    <property type="entry name" value="ATP-grasp_carboxylate-amine"/>
</dbReference>
<dbReference type="InterPro" id="IPR013815">
    <property type="entry name" value="ATP_grasp_subdomain_1"/>
</dbReference>
<dbReference type="InterPro" id="IPR016185">
    <property type="entry name" value="PreATP-grasp_dom_sf"/>
</dbReference>
<dbReference type="InterPro" id="IPR005862">
    <property type="entry name" value="PurT"/>
</dbReference>
<dbReference type="InterPro" id="IPR054350">
    <property type="entry name" value="PurT/PurK_preATP-grasp"/>
</dbReference>
<dbReference type="InterPro" id="IPR048740">
    <property type="entry name" value="PurT_C"/>
</dbReference>
<dbReference type="InterPro" id="IPR011054">
    <property type="entry name" value="Rudment_hybrid_motif"/>
</dbReference>
<dbReference type="NCBIfam" id="NF006766">
    <property type="entry name" value="PRK09288.1"/>
    <property type="match status" value="1"/>
</dbReference>
<dbReference type="NCBIfam" id="TIGR01142">
    <property type="entry name" value="purT"/>
    <property type="match status" value="1"/>
</dbReference>
<dbReference type="PANTHER" id="PTHR43055">
    <property type="entry name" value="FORMATE-DEPENDENT PHOSPHORIBOSYLGLYCINAMIDE FORMYLTRANSFERASE"/>
    <property type="match status" value="1"/>
</dbReference>
<dbReference type="PANTHER" id="PTHR43055:SF1">
    <property type="entry name" value="FORMATE-DEPENDENT PHOSPHORIBOSYLGLYCINAMIDE FORMYLTRANSFERASE"/>
    <property type="match status" value="1"/>
</dbReference>
<dbReference type="Pfam" id="PF02222">
    <property type="entry name" value="ATP-grasp"/>
    <property type="match status" value="1"/>
</dbReference>
<dbReference type="Pfam" id="PF21244">
    <property type="entry name" value="PurT_C"/>
    <property type="match status" value="1"/>
</dbReference>
<dbReference type="Pfam" id="PF22660">
    <property type="entry name" value="RS_preATP-grasp-like"/>
    <property type="match status" value="1"/>
</dbReference>
<dbReference type="SUPFAM" id="SSF56059">
    <property type="entry name" value="Glutathione synthetase ATP-binding domain-like"/>
    <property type="match status" value="1"/>
</dbReference>
<dbReference type="SUPFAM" id="SSF52440">
    <property type="entry name" value="PreATP-grasp domain"/>
    <property type="match status" value="1"/>
</dbReference>
<dbReference type="SUPFAM" id="SSF51246">
    <property type="entry name" value="Rudiment single hybrid motif"/>
    <property type="match status" value="1"/>
</dbReference>
<dbReference type="PROSITE" id="PS50975">
    <property type="entry name" value="ATP_GRASP"/>
    <property type="match status" value="1"/>
</dbReference>
<accession>A1VT89</accession>
<comment type="function">
    <text evidence="1">Involved in the de novo purine biosynthesis. Catalyzes the transfer of formate to 5-phospho-ribosyl-glycinamide (GAR), producing 5-phospho-ribosyl-N-formylglycinamide (FGAR). Formate is provided by PurU via hydrolysis of 10-formyl-tetrahydrofolate.</text>
</comment>
<comment type="catalytic activity">
    <reaction evidence="1">
        <text>N(1)-(5-phospho-beta-D-ribosyl)glycinamide + formate + ATP = N(2)-formyl-N(1)-(5-phospho-beta-D-ribosyl)glycinamide + ADP + phosphate + H(+)</text>
        <dbReference type="Rhea" id="RHEA:24829"/>
        <dbReference type="ChEBI" id="CHEBI:15378"/>
        <dbReference type="ChEBI" id="CHEBI:15740"/>
        <dbReference type="ChEBI" id="CHEBI:30616"/>
        <dbReference type="ChEBI" id="CHEBI:43474"/>
        <dbReference type="ChEBI" id="CHEBI:143788"/>
        <dbReference type="ChEBI" id="CHEBI:147286"/>
        <dbReference type="ChEBI" id="CHEBI:456216"/>
        <dbReference type="EC" id="6.3.1.21"/>
    </reaction>
    <physiologicalReaction direction="left-to-right" evidence="1">
        <dbReference type="Rhea" id="RHEA:24830"/>
    </physiologicalReaction>
</comment>
<comment type="pathway">
    <text evidence="1">Purine metabolism; IMP biosynthesis via de novo pathway; N(2)-formyl-N(1)-(5-phospho-D-ribosyl)glycinamide from N(1)-(5-phospho-D-ribosyl)glycinamide (formate route): step 1/1.</text>
</comment>
<comment type="subunit">
    <text evidence="1">Homodimer.</text>
</comment>
<comment type="similarity">
    <text evidence="1">Belongs to the PurK/PurT family.</text>
</comment>
<protein>
    <recommendedName>
        <fullName evidence="1">Formate-dependent phosphoribosylglycinamide formyltransferase</fullName>
        <ecNumber evidence="1">6.3.1.21</ecNumber>
    </recommendedName>
    <alternativeName>
        <fullName evidence="1">5'-phosphoribosylglycinamide transformylase 2</fullName>
    </alternativeName>
    <alternativeName>
        <fullName evidence="1">Formate-dependent GAR transformylase</fullName>
    </alternativeName>
    <alternativeName>
        <fullName evidence="1">GAR transformylase 2</fullName>
        <shortName evidence="1">GART 2</shortName>
    </alternativeName>
    <alternativeName>
        <fullName evidence="1">Non-folate glycinamide ribonucleotide transformylase</fullName>
    </alternativeName>
    <alternativeName>
        <fullName evidence="1">Phosphoribosylglycinamide formyltransferase 2</fullName>
    </alternativeName>
</protein>
<organism>
    <name type="scientific">Polaromonas naphthalenivorans (strain CJ2)</name>
    <dbReference type="NCBI Taxonomy" id="365044"/>
    <lineage>
        <taxon>Bacteria</taxon>
        <taxon>Pseudomonadati</taxon>
        <taxon>Pseudomonadota</taxon>
        <taxon>Betaproteobacteria</taxon>
        <taxon>Burkholderiales</taxon>
        <taxon>Comamonadaceae</taxon>
        <taxon>Polaromonas</taxon>
    </lineage>
</organism>
<sequence length="401" mass="43127">MTTFGTPLSPHATKVMLLGSGELGKEVLIALQRLGVETIAVDRYENAPGQQVAHHARTITMSDPAQLKALIEQEKPDLVVPEIEAIATGMLEELEAAGTVRVIPTARAARLTMDREGIRRLAAETLALPTSPYVFCDSLEELQTAIDSKIGYPCVVKPVMSSSGKGQSKIALPKDVAPAWDHAMAGGRVSRGRVIVEGFVDFEYEITLLTVRALGADGQVETHFCEPIGHLQVSGDYVESWQPHPMRPAALEKSHEIARAVTDNLSGQGVFGVELFVKGDEVWFSEVSPRPHDTGMVTLCTQWQNEFELHARAILGLPVDTALKSPGASAVIYGGVDAAGIVFDGVADALRVPNTDIRLFGKPESFVKRRMGVALAFDADVDVARTHARLAASKVRPRAAG</sequence>